<protein>
    <recommendedName>
        <fullName evidence="3">Alpha-ketoglutarate-dependent dioxygenase FTO</fullName>
    </recommendedName>
    <alternativeName>
        <fullName evidence="2">Fat mass and obesity-associated protein</fullName>
    </alternativeName>
    <alternativeName>
        <fullName evidence="3">U6 small nuclear RNA (2'-O-methyladenosine-N(6)-)-demethylase FTO</fullName>
        <ecNumber evidence="2">1.14.11.-</ecNumber>
    </alternativeName>
    <alternativeName>
        <fullName evidence="3">U6 small nuclear RNA N(6)-methyladenosine-demethylase FTO</fullName>
        <ecNumber evidence="2">1.14.11.-</ecNumber>
    </alternativeName>
    <alternativeName>
        <fullName evidence="3">mRNA (2'-O-methyladenosine-N(6)-)-demethylase FTO</fullName>
        <shortName evidence="3">m6A(m)-demethylase FTO</shortName>
        <ecNumber evidence="2">1.14.11.-</ecNumber>
    </alternativeName>
    <alternativeName>
        <fullName evidence="3">mRNA N(6)-methyladenosine demethylase FTO</fullName>
        <ecNumber evidence="2">1.14.11.53</ecNumber>
    </alternativeName>
    <alternativeName>
        <fullName evidence="3">tRNA N1-methyl adenine demethylase FTO</fullName>
        <ecNumber evidence="2">1.14.11.-</ecNumber>
    </alternativeName>
</protein>
<comment type="function">
    <text evidence="1 2">RNA demethylase that mediates oxidative demethylation of different RNA species, such as mRNAs, tRNAs and snRNAs, and acts as a regulator of fat mass, adipogenesis and energy homeostasis. Specifically demethylates N(6)-methyladenosine (m6A) RNA, the most prevalent internal modification of messenger RNA (mRNA) in higher eukaryotes. M6A demethylation by FTO affects mRNA expression and stability. Also able to demethylate m6A in U6 small nuclear RNA (snRNA). Mediates demethylation of N(6),2'-O-dimethyladenosine cap (m6A(m)), by demethylating the N(6)-methyladenosine at the second transcribed position of mRNAs and U6 snRNA. Demethylation of m6A(m) in the 5'-cap by FTO affects mRNA stability by promoting susceptibility to decapping. Also acts as a tRNA demethylase by removing N(1)-methyladenine from various tRNAs. Has no activity towards 1-methylguanine. Has no detectable activity towards double-stranded DNA. Also able to repair alkylated DNA and RNA by oxidative demethylation: demethylates single-stranded RNA containing 3-methyluracil, single-stranded DNA containing 3-methylthymine and has low demethylase activity towards single-stranded DNA containing 1-methyladenine or 3-methylcytosine. Ability to repair alkylated DNA and RNA is however unsure in vivo. Involved in the regulation of fat mass, adipogenesis and body weight, thereby contributing to the regulation of body size and body fat accumulation. Involved in the regulation of thermogenesis and the control of adipocyte differentiation into brown or white fat cells (By similarity). Regulates activity of the dopaminergic midbrain circuitry via its ability to demethylate m6A in mRNAs (By similarity).</text>
</comment>
<comment type="catalytic activity">
    <reaction evidence="2">
        <text>a 5'-end (N(7)-methyl 5'-triphosphoguanosine)-(N(6),2'-O-dimethyladenosine) in mRNA + 2-oxoglutarate + O2 = a 5'-end (N(7)-methyl 5'-triphosphoguanosine)-(2'-O-methyladenosine) in mRNA + formaldehyde + succinate + CO2</text>
        <dbReference type="Rhea" id="RHEA:57896"/>
        <dbReference type="Rhea" id="RHEA-COMP:11518"/>
        <dbReference type="Rhea" id="RHEA-COMP:11519"/>
        <dbReference type="ChEBI" id="CHEBI:15379"/>
        <dbReference type="ChEBI" id="CHEBI:16526"/>
        <dbReference type="ChEBI" id="CHEBI:16810"/>
        <dbReference type="ChEBI" id="CHEBI:16842"/>
        <dbReference type="ChEBI" id="CHEBI:30031"/>
        <dbReference type="ChEBI" id="CHEBI:85958"/>
        <dbReference type="ChEBI" id="CHEBI:85959"/>
    </reaction>
</comment>
<comment type="catalytic activity">
    <reaction evidence="2">
        <text>an N(6)-methyladenosine in mRNA + 2-oxoglutarate + O2 = an adenosine in mRNA + formaldehyde + succinate + CO2</text>
        <dbReference type="Rhea" id="RHEA:49520"/>
        <dbReference type="Rhea" id="RHEA-COMP:12414"/>
        <dbReference type="Rhea" id="RHEA-COMP:12417"/>
        <dbReference type="ChEBI" id="CHEBI:15379"/>
        <dbReference type="ChEBI" id="CHEBI:16526"/>
        <dbReference type="ChEBI" id="CHEBI:16810"/>
        <dbReference type="ChEBI" id="CHEBI:16842"/>
        <dbReference type="ChEBI" id="CHEBI:30031"/>
        <dbReference type="ChEBI" id="CHEBI:74411"/>
        <dbReference type="ChEBI" id="CHEBI:74449"/>
        <dbReference type="EC" id="1.14.11.53"/>
    </reaction>
</comment>
<comment type="catalytic activity">
    <reaction evidence="2">
        <text>N(6)-methyladenosine in U6 snRNA + 2-oxoglutarate + O2 = adenosine in U6 snRNA + formaldehyde + succinate + CO2</text>
        <dbReference type="Rhea" id="RHEA:57900"/>
        <dbReference type="Rhea" id="RHEA-COMP:13573"/>
        <dbReference type="Rhea" id="RHEA-COMP:13574"/>
        <dbReference type="ChEBI" id="CHEBI:15379"/>
        <dbReference type="ChEBI" id="CHEBI:16526"/>
        <dbReference type="ChEBI" id="CHEBI:16810"/>
        <dbReference type="ChEBI" id="CHEBI:16842"/>
        <dbReference type="ChEBI" id="CHEBI:30031"/>
        <dbReference type="ChEBI" id="CHEBI:74411"/>
        <dbReference type="ChEBI" id="CHEBI:74449"/>
    </reaction>
</comment>
<comment type="catalytic activity">
    <reaction evidence="2">
        <text>a 5'-end (N(7)-methyl 5'-triphosphoguanosine)-(N(6),2'-O-dimethyladenosine) in U6 snRNA + 2-oxoglutarate + O2 = a 5'-end (N(7)-methyl 5'-triphosphoguanosine)-(2'-O-methyladenosine) in U6 snRNA + formaldehyde + succinate + CO2</text>
        <dbReference type="Rhea" id="RHEA:57904"/>
        <dbReference type="Rhea" id="RHEA-COMP:15030"/>
        <dbReference type="Rhea" id="RHEA-COMP:15031"/>
        <dbReference type="ChEBI" id="CHEBI:15379"/>
        <dbReference type="ChEBI" id="CHEBI:16526"/>
        <dbReference type="ChEBI" id="CHEBI:16810"/>
        <dbReference type="ChEBI" id="CHEBI:16842"/>
        <dbReference type="ChEBI" id="CHEBI:30031"/>
        <dbReference type="ChEBI" id="CHEBI:85958"/>
        <dbReference type="ChEBI" id="CHEBI:85959"/>
    </reaction>
</comment>
<comment type="catalytic activity">
    <reaction evidence="2">
        <text>an N(1)-methyladenosine in tRNA + 2-oxoglutarate + O2 = an adenosine in tRNA + formaldehyde + succinate + CO2</text>
        <dbReference type="Rhea" id="RHEA:54576"/>
        <dbReference type="Rhea" id="RHEA-COMP:10242"/>
        <dbReference type="Rhea" id="RHEA-COMP:12312"/>
        <dbReference type="ChEBI" id="CHEBI:15379"/>
        <dbReference type="ChEBI" id="CHEBI:16526"/>
        <dbReference type="ChEBI" id="CHEBI:16810"/>
        <dbReference type="ChEBI" id="CHEBI:16842"/>
        <dbReference type="ChEBI" id="CHEBI:30031"/>
        <dbReference type="ChEBI" id="CHEBI:74411"/>
        <dbReference type="ChEBI" id="CHEBI:74491"/>
    </reaction>
</comment>
<comment type="cofactor">
    <cofactor evidence="2">
        <name>Fe(2+)</name>
        <dbReference type="ChEBI" id="CHEBI:29033"/>
    </cofactor>
    <text evidence="2">Binds 1 Fe(2+) ion per subunit.</text>
</comment>
<comment type="activity regulation">
    <text evidence="1">Activated by ascorbate. Inhibited by N-oxalylglycine, fumarate and succinate.</text>
</comment>
<comment type="subunit">
    <text evidence="1">Monomer. May also exist as homodimer.</text>
</comment>
<comment type="subcellular location">
    <subcellularLocation>
        <location evidence="2">Nucleus</location>
    </subcellularLocation>
    <subcellularLocation>
        <location evidence="2">Nucleus speckle</location>
    </subcellularLocation>
    <subcellularLocation>
        <location evidence="2">Cytoplasm</location>
    </subcellularLocation>
    <text evidence="2">Localizes mainly in the nucleus, where it is able to demethylate N(6)-methyladenosine (m6A) and N(6),2'-O-dimethyladenosine cap (m6A(m)) in U6 small nuclear RNA (snRNA), N(1)-methyladenine from tRNAs and internal m6A in mRNAs. In the cytoplasm, mediates demethylation of m6A and m6A(m) in mRNAs and N(1)-methyladenine from tRNAs.</text>
</comment>
<comment type="domain">
    <text evidence="2">The 3D-structure of the Fe2OG dioxygenase domain is similar to that of the Fe2OG dioxygenase domain found in the bacterial DNA repair dioxygenase alkB and its mammalian orthologs, but sequence similarity is very low. As a consequence, the domain is not detected by protein signature databases.</text>
</comment>
<comment type="similarity">
    <text evidence="3">Belongs to the fto family.</text>
</comment>
<sequence>MKRTPTAEEREREAKKLRLLEELEDTWLPYLTPKDDEFYQQWQLKYPKLILREASSVSEELHKEVQEAFLTMHKHGCLFRDLVRIQGKDLLTPVSRILIGNPGCTYKYLNTRLFTVPWPVKGSNIKHTEAEIAAACETFLKLNDYLQIETIQALEELAAKEKANEDTVPLCMSADFPRVGMGSSYNGQDEVDIKSRAAYNVTLLNFMDPQKMPYLKEEPYFGMGKMAVSWHHDENLVDRSAVAVYSYSCEGPEEESEDDSHLEGRDPDIWHVGFKISWDIETPGLAIPLHQGDCYFMLDDLNATHQHCVLAGSQPRFSSTHRVAECSTGTLDYILQRCQLAPQNVRDDVENDDVSLKSFEPAVLKQGEEIHNEVEFEWLRQFWFQGNRYRKCTDWWCQPMAQLEALWKKMEAVTNAVLHEVKREGLPVEQRNEILTAILASLTARQNLRREWHARCQSRIARTLPADQKPECRPYWEKDDVSMPLPFDLTDIVSELRGQLLEAKP</sequence>
<feature type="chain" id="PRO_0000286165" description="Alpha-ketoglutarate-dependent dioxygenase FTO">
    <location>
        <begin position="1"/>
        <end position="505"/>
    </location>
</feature>
<feature type="region of interest" description="Fe2OG dioxygenase domain" evidence="2">
    <location>
        <begin position="32"/>
        <end position="327"/>
    </location>
</feature>
<feature type="region of interest" description="Loop L1; predicted to block binding of double-stranded DNA or RNA" evidence="2">
    <location>
        <begin position="213"/>
        <end position="224"/>
    </location>
</feature>
<feature type="binding site" evidence="2">
    <location>
        <position position="96"/>
    </location>
    <ligand>
        <name>substrate</name>
    </ligand>
</feature>
<feature type="binding site" evidence="2">
    <location>
        <position position="108"/>
    </location>
    <ligand>
        <name>substrate</name>
    </ligand>
</feature>
<feature type="binding site" evidence="2">
    <location>
        <position position="205"/>
    </location>
    <ligand>
        <name>2-oxoglutarate</name>
        <dbReference type="ChEBI" id="CHEBI:16810"/>
    </ligand>
</feature>
<feature type="binding site" evidence="2">
    <location>
        <begin position="231"/>
        <end position="234"/>
    </location>
    <ligand>
        <name>substrate</name>
    </ligand>
</feature>
<feature type="binding site" evidence="2">
    <location>
        <position position="231"/>
    </location>
    <ligand>
        <name>Fe cation</name>
        <dbReference type="ChEBI" id="CHEBI:24875"/>
        <note>catalytic</note>
    </ligand>
</feature>
<feature type="binding site" evidence="2">
    <location>
        <position position="233"/>
    </location>
    <ligand>
        <name>Fe cation</name>
        <dbReference type="ChEBI" id="CHEBI:24875"/>
        <note>catalytic</note>
    </ligand>
</feature>
<feature type="binding site" evidence="2">
    <location>
        <position position="295"/>
    </location>
    <ligand>
        <name>2-oxoglutarate</name>
        <dbReference type="ChEBI" id="CHEBI:16810"/>
    </ligand>
</feature>
<feature type="binding site" evidence="2">
    <location>
        <position position="307"/>
    </location>
    <ligand>
        <name>Fe cation</name>
        <dbReference type="ChEBI" id="CHEBI:24875"/>
        <note>catalytic</note>
    </ligand>
</feature>
<feature type="binding site" evidence="2">
    <location>
        <begin position="316"/>
        <end position="318"/>
    </location>
    <ligand>
        <name>2-oxoglutarate</name>
        <dbReference type="ChEBI" id="CHEBI:16810"/>
    </ligand>
</feature>
<feature type="binding site" evidence="2">
    <location>
        <position position="320"/>
    </location>
    <ligand>
        <name>2-oxoglutarate</name>
        <dbReference type="ChEBI" id="CHEBI:16810"/>
    </ligand>
</feature>
<feature type="binding site" evidence="2">
    <location>
        <position position="322"/>
    </location>
    <ligand>
        <name>2-oxoglutarate</name>
        <dbReference type="ChEBI" id="CHEBI:16810"/>
    </ligand>
</feature>
<feature type="modified residue" description="Phosphothreonine" evidence="2">
    <location>
        <position position="4"/>
    </location>
</feature>
<feature type="modified residue" description="N6-acetyllysine" evidence="2">
    <location>
        <position position="216"/>
    </location>
</feature>
<keyword id="KW-0007">Acetylation</keyword>
<keyword id="KW-0963">Cytoplasm</keyword>
<keyword id="KW-0223">Dioxygenase</keyword>
<keyword id="KW-0408">Iron</keyword>
<keyword id="KW-0479">Metal-binding</keyword>
<keyword id="KW-0539">Nucleus</keyword>
<keyword id="KW-0560">Oxidoreductase</keyword>
<keyword id="KW-0597">Phosphoprotein</keyword>
<keyword id="KW-1185">Reference proteome</keyword>
<reference key="1">
    <citation type="submission" date="2004-11" db="EMBL/GenBank/DDBJ databases">
        <authorList>
            <consortium name="The German cDNA consortium"/>
        </authorList>
    </citation>
    <scope>NUCLEOTIDE SEQUENCE [LARGE SCALE MRNA]</scope>
    <source>
        <tissue>Brain cortex</tissue>
    </source>
</reference>
<evidence type="ECO:0000250" key="1">
    <source>
        <dbReference type="UniProtKB" id="Q8BGW1"/>
    </source>
</evidence>
<evidence type="ECO:0000250" key="2">
    <source>
        <dbReference type="UniProtKB" id="Q9C0B1"/>
    </source>
</evidence>
<evidence type="ECO:0000305" key="3"/>
<name>FTO_PONAB</name>
<dbReference type="EC" id="1.14.11.-" evidence="2"/>
<dbReference type="EC" id="1.14.11.53" evidence="2"/>
<dbReference type="EMBL" id="CR859989">
    <property type="protein sequence ID" value="CAH92140.1"/>
    <property type="molecule type" value="mRNA"/>
</dbReference>
<dbReference type="RefSeq" id="NP_001126250.1">
    <property type="nucleotide sequence ID" value="NM_001132778.1"/>
</dbReference>
<dbReference type="SMR" id="Q5R7X0"/>
<dbReference type="FunCoup" id="Q5R7X0">
    <property type="interactions" value="3836"/>
</dbReference>
<dbReference type="STRING" id="9601.ENSPPYP00000008304"/>
<dbReference type="GeneID" id="100173222"/>
<dbReference type="KEGG" id="pon:100173222"/>
<dbReference type="CTD" id="79068"/>
<dbReference type="eggNOG" id="ENOG502QR31">
    <property type="taxonomic scope" value="Eukaryota"/>
</dbReference>
<dbReference type="InParanoid" id="Q5R7X0"/>
<dbReference type="OrthoDB" id="46257at2759"/>
<dbReference type="Proteomes" id="UP000001595">
    <property type="component" value="Unplaced"/>
</dbReference>
<dbReference type="GO" id="GO:0005737">
    <property type="term" value="C:cytoplasm"/>
    <property type="evidence" value="ECO:0000250"/>
    <property type="project" value="UniProtKB"/>
</dbReference>
<dbReference type="GO" id="GO:0016607">
    <property type="term" value="C:nuclear speck"/>
    <property type="evidence" value="ECO:0000250"/>
    <property type="project" value="UniProtKB"/>
</dbReference>
<dbReference type="GO" id="GO:0005634">
    <property type="term" value="C:nucleus"/>
    <property type="evidence" value="ECO:0000250"/>
    <property type="project" value="UniProtKB"/>
</dbReference>
<dbReference type="GO" id="GO:0035516">
    <property type="term" value="F:broad specificity oxidative DNA demethylase activity"/>
    <property type="evidence" value="ECO:0000250"/>
    <property type="project" value="UniProtKB"/>
</dbReference>
<dbReference type="GO" id="GO:0008198">
    <property type="term" value="F:ferrous iron binding"/>
    <property type="evidence" value="ECO:0000250"/>
    <property type="project" value="UniProtKB"/>
</dbReference>
<dbReference type="GO" id="GO:1990931">
    <property type="term" value="F:mRNA N6-methyladenosine dioxygenase activity"/>
    <property type="evidence" value="ECO:0000250"/>
    <property type="project" value="UniProtKB"/>
</dbReference>
<dbReference type="GO" id="GO:0035515">
    <property type="term" value="F:oxidative RNA demethylase activity"/>
    <property type="evidence" value="ECO:0000250"/>
    <property type="project" value="UniProtKB"/>
</dbReference>
<dbReference type="GO" id="GO:1990984">
    <property type="term" value="F:tRNA demethylase activity"/>
    <property type="evidence" value="ECO:0000250"/>
    <property type="project" value="UniProtKB"/>
</dbReference>
<dbReference type="GO" id="GO:0006307">
    <property type="term" value="P:DNA alkylation repair"/>
    <property type="evidence" value="ECO:0007669"/>
    <property type="project" value="InterPro"/>
</dbReference>
<dbReference type="GO" id="GO:0061157">
    <property type="term" value="P:mRNA destabilization"/>
    <property type="evidence" value="ECO:0000250"/>
    <property type="project" value="UniProtKB"/>
</dbReference>
<dbReference type="GO" id="GO:0040014">
    <property type="term" value="P:regulation of multicellular organism growth"/>
    <property type="evidence" value="ECO:0007669"/>
    <property type="project" value="InterPro"/>
</dbReference>
<dbReference type="GO" id="GO:0042245">
    <property type="term" value="P:RNA repair"/>
    <property type="evidence" value="ECO:0007669"/>
    <property type="project" value="InterPro"/>
</dbReference>
<dbReference type="FunFam" id="1.20.58.1470:FF:000001">
    <property type="entry name" value="FTO, alpha-ketoglutarate dependent dioxygenase"/>
    <property type="match status" value="1"/>
</dbReference>
<dbReference type="FunFam" id="2.60.120.590:FF:000001">
    <property type="entry name" value="FTO, alpha-ketoglutarate dependent dioxygenase"/>
    <property type="match status" value="1"/>
</dbReference>
<dbReference type="Gene3D" id="2.60.120.590">
    <property type="entry name" value="Alpha-ketoglutarate-dependent dioxygenase AlkB-like"/>
    <property type="match status" value="1"/>
</dbReference>
<dbReference type="Gene3D" id="1.20.58.1470">
    <property type="entry name" value="FTO C-terminal domain"/>
    <property type="match status" value="1"/>
</dbReference>
<dbReference type="InterPro" id="IPR037151">
    <property type="entry name" value="AlkB-like_sf"/>
</dbReference>
<dbReference type="InterPro" id="IPR032868">
    <property type="entry name" value="FTO"/>
</dbReference>
<dbReference type="InterPro" id="IPR024366">
    <property type="entry name" value="FTO_C"/>
</dbReference>
<dbReference type="InterPro" id="IPR038413">
    <property type="entry name" value="FTO_C_sf"/>
</dbReference>
<dbReference type="InterPro" id="IPR024367">
    <property type="entry name" value="FTO_cat_dom"/>
</dbReference>
<dbReference type="PANTHER" id="PTHR31291">
    <property type="entry name" value="ALPHA-KETOGLUTARATE-DEPENDENT DIOXYGENASE FTO"/>
    <property type="match status" value="1"/>
</dbReference>
<dbReference type="PANTHER" id="PTHR31291:SF2">
    <property type="entry name" value="ALPHA-KETOGLUTARATE-DEPENDENT DIOXYGENASE FTO"/>
    <property type="match status" value="1"/>
</dbReference>
<dbReference type="Pfam" id="PF12934">
    <property type="entry name" value="FTO_CTD"/>
    <property type="match status" value="1"/>
</dbReference>
<dbReference type="Pfam" id="PF12933">
    <property type="entry name" value="FTO_NTD"/>
    <property type="match status" value="1"/>
</dbReference>
<dbReference type="SMART" id="SM01223">
    <property type="entry name" value="FTO_NTD"/>
    <property type="match status" value="1"/>
</dbReference>
<gene>
    <name evidence="2" type="primary">FTO</name>
</gene>
<proteinExistence type="evidence at transcript level"/>
<organism>
    <name type="scientific">Pongo abelii</name>
    <name type="common">Sumatran orangutan</name>
    <name type="synonym">Pongo pygmaeus abelii</name>
    <dbReference type="NCBI Taxonomy" id="9601"/>
    <lineage>
        <taxon>Eukaryota</taxon>
        <taxon>Metazoa</taxon>
        <taxon>Chordata</taxon>
        <taxon>Craniata</taxon>
        <taxon>Vertebrata</taxon>
        <taxon>Euteleostomi</taxon>
        <taxon>Mammalia</taxon>
        <taxon>Eutheria</taxon>
        <taxon>Euarchontoglires</taxon>
        <taxon>Primates</taxon>
        <taxon>Haplorrhini</taxon>
        <taxon>Catarrhini</taxon>
        <taxon>Hominidae</taxon>
        <taxon>Pongo</taxon>
    </lineage>
</organism>
<accession>Q5R7X0</accession>